<organism>
    <name type="scientific">Citrobacter koseri (strain ATCC BAA-895 / CDC 4225-83 / SGSC4696)</name>
    <dbReference type="NCBI Taxonomy" id="290338"/>
    <lineage>
        <taxon>Bacteria</taxon>
        <taxon>Pseudomonadati</taxon>
        <taxon>Pseudomonadota</taxon>
        <taxon>Gammaproteobacteria</taxon>
        <taxon>Enterobacterales</taxon>
        <taxon>Enterobacteriaceae</taxon>
        <taxon>Citrobacter</taxon>
    </lineage>
</organism>
<proteinExistence type="inferred from homology"/>
<reference key="1">
    <citation type="submission" date="2007-08" db="EMBL/GenBank/DDBJ databases">
        <authorList>
            <consortium name="The Citrobacter koseri Genome Sequencing Project"/>
            <person name="McClelland M."/>
            <person name="Sanderson E.K."/>
            <person name="Porwollik S."/>
            <person name="Spieth J."/>
            <person name="Clifton W.S."/>
            <person name="Latreille P."/>
            <person name="Courtney L."/>
            <person name="Wang C."/>
            <person name="Pepin K."/>
            <person name="Bhonagiri V."/>
            <person name="Nash W."/>
            <person name="Johnson M."/>
            <person name="Thiruvilangam P."/>
            <person name="Wilson R."/>
        </authorList>
    </citation>
    <scope>NUCLEOTIDE SEQUENCE [LARGE SCALE GENOMIC DNA]</scope>
    <source>
        <strain>ATCC BAA-895 / CDC 4225-83 / SGSC4696</strain>
    </source>
</reference>
<accession>A8AGM8</accession>
<dbReference type="EMBL" id="CP000822">
    <property type="protein sequence ID" value="ABV12641.1"/>
    <property type="molecule type" value="Genomic_DNA"/>
</dbReference>
<dbReference type="RefSeq" id="WP_012132382.1">
    <property type="nucleotide sequence ID" value="NC_009792.1"/>
</dbReference>
<dbReference type="SMR" id="A8AGM8"/>
<dbReference type="STRING" id="290338.CKO_01508"/>
<dbReference type="GeneID" id="45135578"/>
<dbReference type="KEGG" id="cko:CKO_01508"/>
<dbReference type="HOGENOM" id="CLU_058202_0_0_6"/>
<dbReference type="OrthoDB" id="7055111at2"/>
<dbReference type="Proteomes" id="UP000008148">
    <property type="component" value="Chromosome"/>
</dbReference>
<dbReference type="GO" id="GO:0009279">
    <property type="term" value="C:cell outer membrane"/>
    <property type="evidence" value="ECO:0007669"/>
    <property type="project" value="UniProtKB-SubCell"/>
</dbReference>
<dbReference type="GO" id="GO:0046930">
    <property type="term" value="C:pore complex"/>
    <property type="evidence" value="ECO:0007669"/>
    <property type="project" value="UniProtKB-KW"/>
</dbReference>
<dbReference type="GO" id="GO:0015288">
    <property type="term" value="F:porin activity"/>
    <property type="evidence" value="ECO:0007669"/>
    <property type="project" value="UniProtKB-KW"/>
</dbReference>
<dbReference type="GO" id="GO:0034220">
    <property type="term" value="P:monoatomic ion transmembrane transport"/>
    <property type="evidence" value="ECO:0007669"/>
    <property type="project" value="InterPro"/>
</dbReference>
<dbReference type="CDD" id="cd00342">
    <property type="entry name" value="gram_neg_porins"/>
    <property type="match status" value="1"/>
</dbReference>
<dbReference type="Gene3D" id="2.40.160.10">
    <property type="entry name" value="Porin"/>
    <property type="match status" value="1"/>
</dbReference>
<dbReference type="InterPro" id="IPR050298">
    <property type="entry name" value="Gram-neg_bact_OMP"/>
</dbReference>
<dbReference type="InterPro" id="IPR033900">
    <property type="entry name" value="Gram_neg_porin_domain"/>
</dbReference>
<dbReference type="InterPro" id="IPR023614">
    <property type="entry name" value="Porin_dom_sf"/>
</dbReference>
<dbReference type="InterPro" id="IPR001897">
    <property type="entry name" value="Porin_gammaproteobac"/>
</dbReference>
<dbReference type="InterPro" id="IPR001702">
    <property type="entry name" value="Porin_Gram-ve"/>
</dbReference>
<dbReference type="InterPro" id="IPR013793">
    <property type="entry name" value="Porin_Gram-ve_CS"/>
</dbReference>
<dbReference type="NCBIfam" id="NF007841">
    <property type="entry name" value="PRK10554.1"/>
    <property type="match status" value="1"/>
</dbReference>
<dbReference type="PANTHER" id="PTHR34501:SF2">
    <property type="entry name" value="OUTER MEMBRANE PORIN F-RELATED"/>
    <property type="match status" value="1"/>
</dbReference>
<dbReference type="PANTHER" id="PTHR34501">
    <property type="entry name" value="PROTEIN YDDL-RELATED"/>
    <property type="match status" value="1"/>
</dbReference>
<dbReference type="Pfam" id="PF00267">
    <property type="entry name" value="Porin_1"/>
    <property type="match status" value="1"/>
</dbReference>
<dbReference type="PRINTS" id="PR00183">
    <property type="entry name" value="ECOLIPORIN"/>
</dbReference>
<dbReference type="PRINTS" id="PR00182">
    <property type="entry name" value="ECOLNEIPORIN"/>
</dbReference>
<dbReference type="SUPFAM" id="SSF56935">
    <property type="entry name" value="Porins"/>
    <property type="match status" value="1"/>
</dbReference>
<dbReference type="PROSITE" id="PS00576">
    <property type="entry name" value="GRAM_NEG_PORIN"/>
    <property type="match status" value="1"/>
</dbReference>
<sequence>MKLKLVAVAVTTLLAAGAVNAAEVYNKDGNKLDLYGKVHAQHYFSDDTGSDGDKTYARLGFKGETQINDQLTGFGQWEYEFKGNRSENQGSDKDKTRLAFAGLKFAEFGSFDYGRNYGVAYDIGAWTDVLPEFGGDTWTQTDVFMTGRTTGVATYRNTDFFGLVEGLNFAAQYQGKNDRDGVQEANGDGFGLSATYEYEGFGVGATYAKSDRTDKQVNAASNFNANGKNAEVWAAGLKYDANDIYLAATYSETLNMTTFGDDHIANKTQNFEAVAQYQFDFGLRPSIAYLKSKGKDIGSWGDQDLVEYIDLGATYYFNKNMSTFVDYKINLLDDTNFTKDARVSTDNVVAVGLNYQF</sequence>
<evidence type="ECO:0000250" key="1"/>
<evidence type="ECO:0000255" key="2"/>
<evidence type="ECO:0000305" key="3"/>
<gene>
    <name type="primary">ompD</name>
    <name type="ordered locus">CKO_01508</name>
</gene>
<name>OMPD_CITK8</name>
<keyword id="KW-0998">Cell outer membrane</keyword>
<keyword id="KW-0406">Ion transport</keyword>
<keyword id="KW-0472">Membrane</keyword>
<keyword id="KW-0626">Porin</keyword>
<keyword id="KW-1185">Reference proteome</keyword>
<keyword id="KW-0732">Signal</keyword>
<keyword id="KW-0812">Transmembrane</keyword>
<keyword id="KW-1134">Transmembrane beta strand</keyword>
<keyword id="KW-0813">Transport</keyword>
<protein>
    <recommendedName>
        <fullName>Outer membrane porin protein OmpD</fullName>
    </recommendedName>
</protein>
<feature type="signal peptide" evidence="2">
    <location>
        <begin position="1"/>
        <end position="21"/>
    </location>
</feature>
<feature type="chain" id="PRO_0000321869" description="Outer membrane porin protein OmpD">
    <location>
        <begin position="22"/>
        <end position="357"/>
    </location>
</feature>
<comment type="function">
    <text evidence="1">Forms pores that allow passive diffusion of small molecules across the outer membrane.</text>
</comment>
<comment type="subunit">
    <text evidence="1">Homotrimer.</text>
</comment>
<comment type="subcellular location">
    <subcellularLocation>
        <location evidence="1">Cell outer membrane</location>
        <topology evidence="1">Multi-pass membrane protein</topology>
    </subcellularLocation>
</comment>
<comment type="similarity">
    <text evidence="3">Belongs to the Gram-negative porin family.</text>
</comment>